<sequence>MLFRSVHHIVARFSNSTSTPIHRFFYSPSLLRRRSSFNASLISRCCSSVSDVDVARDAVVKIFSFSREPNVVQPWQTTEKEYSSSGFAISGRRILTNAHVVGDHLYLQVRKHGSPTKYKAEVKAFRYGCDLAILGIDSEEFWEDINPLELGGIPFIGETVYALGYPRGGDTISVTKGIVTRVEPQKYSHSSIKMYVYTSGGSTNKFYSGQINKKIYDGR</sequence>
<gene>
    <name type="primary">DEGP6</name>
    <name type="ordered locus">At1g51150</name>
    <name type="ORF">F11M15.1</name>
    <name type="ORF">F23H24.2</name>
</gene>
<protein>
    <recommendedName>
        <fullName>Putative protease Do-like 6, chloroplastic</fullName>
        <shortName>DEGP protease 6</shortName>
        <ecNumber>3.4.21.-</ecNumber>
    </recommendedName>
</protein>
<proteinExistence type="inferred from homology"/>
<accession>Q9C691</accession>
<accession>F4I802</accession>
<accession>Q9SYB7</accession>
<name>DEGP6_ARATH</name>
<dbReference type="EC" id="3.4.21.-"/>
<dbReference type="EMBL" id="AC006085">
    <property type="protein sequence ID" value="AAD30628.1"/>
    <property type="status" value="ALT_SEQ"/>
    <property type="molecule type" value="Genomic_DNA"/>
</dbReference>
<dbReference type="EMBL" id="AC079828">
    <property type="protein sequence ID" value="AAG50541.1"/>
    <property type="status" value="ALT_SEQ"/>
    <property type="molecule type" value="Genomic_DNA"/>
</dbReference>
<dbReference type="EMBL" id="CP002684">
    <property type="protein sequence ID" value="AEE32627.1"/>
    <property type="molecule type" value="Genomic_DNA"/>
</dbReference>
<dbReference type="PIR" id="A96549">
    <property type="entry name" value="A96549"/>
</dbReference>
<dbReference type="RefSeq" id="NP_175527.2">
    <property type="nucleotide sequence ID" value="NM_103994.2"/>
</dbReference>
<dbReference type="SMR" id="Q9C691"/>
<dbReference type="STRING" id="3702.Q9C691"/>
<dbReference type="MEROPS" id="S01.A09"/>
<dbReference type="iPTMnet" id="Q9C691"/>
<dbReference type="PaxDb" id="3702-AT1G51150.1"/>
<dbReference type="EnsemblPlants" id="AT1G51150.1">
    <property type="protein sequence ID" value="AT1G51150.1"/>
    <property type="gene ID" value="AT1G51150"/>
</dbReference>
<dbReference type="GeneID" id="841538"/>
<dbReference type="Gramene" id="AT1G51150.1">
    <property type="protein sequence ID" value="AT1G51150.1"/>
    <property type="gene ID" value="AT1G51150"/>
</dbReference>
<dbReference type="KEGG" id="ath:AT1G51150"/>
<dbReference type="Araport" id="AT1G51150"/>
<dbReference type="TAIR" id="AT1G51150">
    <property type="gene designation" value="DEG6"/>
</dbReference>
<dbReference type="eggNOG" id="KOG1320">
    <property type="taxonomic scope" value="Eukaryota"/>
</dbReference>
<dbReference type="HOGENOM" id="CLU_1263103_0_0_1"/>
<dbReference type="InParanoid" id="Q9C691"/>
<dbReference type="PRO" id="PR:Q9C691"/>
<dbReference type="Proteomes" id="UP000006548">
    <property type="component" value="Chromosome 1"/>
</dbReference>
<dbReference type="ExpressionAtlas" id="Q9C691">
    <property type="expression patterns" value="baseline"/>
</dbReference>
<dbReference type="GO" id="GO:0009507">
    <property type="term" value="C:chloroplast"/>
    <property type="evidence" value="ECO:0007669"/>
    <property type="project" value="UniProtKB-SubCell"/>
</dbReference>
<dbReference type="GO" id="GO:0008236">
    <property type="term" value="F:serine-type peptidase activity"/>
    <property type="evidence" value="ECO:0007669"/>
    <property type="project" value="UniProtKB-KW"/>
</dbReference>
<dbReference type="GO" id="GO:0006508">
    <property type="term" value="P:proteolysis"/>
    <property type="evidence" value="ECO:0007669"/>
    <property type="project" value="UniProtKB-KW"/>
</dbReference>
<dbReference type="Gene3D" id="2.40.10.120">
    <property type="match status" value="1"/>
</dbReference>
<dbReference type="InterPro" id="IPR009003">
    <property type="entry name" value="Peptidase_S1_PA"/>
</dbReference>
<dbReference type="PANTHER" id="PTHR45980">
    <property type="match status" value="1"/>
</dbReference>
<dbReference type="PANTHER" id="PTHR45980:SF9">
    <property type="entry name" value="PROTEASE DO-LIKE 10, MITOCHONDRIAL-RELATED"/>
    <property type="match status" value="1"/>
</dbReference>
<dbReference type="Pfam" id="PF13365">
    <property type="entry name" value="Trypsin_2"/>
    <property type="match status" value="1"/>
</dbReference>
<dbReference type="SUPFAM" id="SSF50494">
    <property type="entry name" value="Trypsin-like serine proteases"/>
    <property type="match status" value="1"/>
</dbReference>
<comment type="function">
    <text>Putative serine protease.</text>
</comment>
<comment type="subcellular location">
    <subcellularLocation>
        <location evidence="2">Plastid</location>
        <location evidence="2">Chloroplast</location>
    </subcellularLocation>
</comment>
<comment type="similarity">
    <text evidence="2">Belongs to the peptidase S1B family.</text>
</comment>
<comment type="sequence caution" evidence="2">
    <conflict type="erroneous gene model prediction">
        <sequence resource="EMBL-CDS" id="AAD30628"/>
    </conflict>
</comment>
<comment type="sequence caution" evidence="2">
    <conflict type="erroneous gene model prediction">
        <sequence resource="EMBL-CDS" id="AAG50541"/>
    </conflict>
</comment>
<organism>
    <name type="scientific">Arabidopsis thaliana</name>
    <name type="common">Mouse-ear cress</name>
    <dbReference type="NCBI Taxonomy" id="3702"/>
    <lineage>
        <taxon>Eukaryota</taxon>
        <taxon>Viridiplantae</taxon>
        <taxon>Streptophyta</taxon>
        <taxon>Embryophyta</taxon>
        <taxon>Tracheophyta</taxon>
        <taxon>Spermatophyta</taxon>
        <taxon>Magnoliopsida</taxon>
        <taxon>eudicotyledons</taxon>
        <taxon>Gunneridae</taxon>
        <taxon>Pentapetalae</taxon>
        <taxon>rosids</taxon>
        <taxon>malvids</taxon>
        <taxon>Brassicales</taxon>
        <taxon>Brassicaceae</taxon>
        <taxon>Camelineae</taxon>
        <taxon>Arabidopsis</taxon>
    </lineage>
</organism>
<reference key="1">
    <citation type="journal article" date="2000" name="Nature">
        <title>Sequence and analysis of chromosome 1 of the plant Arabidopsis thaliana.</title>
        <authorList>
            <person name="Theologis A."/>
            <person name="Ecker J.R."/>
            <person name="Palm C.J."/>
            <person name="Federspiel N.A."/>
            <person name="Kaul S."/>
            <person name="White O."/>
            <person name="Alonso J."/>
            <person name="Altafi H."/>
            <person name="Araujo R."/>
            <person name="Bowman C.L."/>
            <person name="Brooks S.Y."/>
            <person name="Buehler E."/>
            <person name="Chan A."/>
            <person name="Chao Q."/>
            <person name="Chen H."/>
            <person name="Cheuk R.F."/>
            <person name="Chin C.W."/>
            <person name="Chung M.K."/>
            <person name="Conn L."/>
            <person name="Conway A.B."/>
            <person name="Conway A.R."/>
            <person name="Creasy T.H."/>
            <person name="Dewar K."/>
            <person name="Dunn P."/>
            <person name="Etgu P."/>
            <person name="Feldblyum T.V."/>
            <person name="Feng J.-D."/>
            <person name="Fong B."/>
            <person name="Fujii C.Y."/>
            <person name="Gill J.E."/>
            <person name="Goldsmith A.D."/>
            <person name="Haas B."/>
            <person name="Hansen N.F."/>
            <person name="Hughes B."/>
            <person name="Huizar L."/>
            <person name="Hunter J.L."/>
            <person name="Jenkins J."/>
            <person name="Johnson-Hopson C."/>
            <person name="Khan S."/>
            <person name="Khaykin E."/>
            <person name="Kim C.J."/>
            <person name="Koo H.L."/>
            <person name="Kremenetskaia I."/>
            <person name="Kurtz D.B."/>
            <person name="Kwan A."/>
            <person name="Lam B."/>
            <person name="Langin-Hooper S."/>
            <person name="Lee A."/>
            <person name="Lee J.M."/>
            <person name="Lenz C.A."/>
            <person name="Li J.H."/>
            <person name="Li Y.-P."/>
            <person name="Lin X."/>
            <person name="Liu S.X."/>
            <person name="Liu Z.A."/>
            <person name="Luros J.S."/>
            <person name="Maiti R."/>
            <person name="Marziali A."/>
            <person name="Militscher J."/>
            <person name="Miranda M."/>
            <person name="Nguyen M."/>
            <person name="Nierman W.C."/>
            <person name="Osborne B.I."/>
            <person name="Pai G."/>
            <person name="Peterson J."/>
            <person name="Pham P.K."/>
            <person name="Rizzo M."/>
            <person name="Rooney T."/>
            <person name="Rowley D."/>
            <person name="Sakano H."/>
            <person name="Salzberg S.L."/>
            <person name="Schwartz J.R."/>
            <person name="Shinn P."/>
            <person name="Southwick A.M."/>
            <person name="Sun H."/>
            <person name="Tallon L.J."/>
            <person name="Tambunga G."/>
            <person name="Toriumi M.J."/>
            <person name="Town C.D."/>
            <person name="Utterback T."/>
            <person name="Van Aken S."/>
            <person name="Vaysberg M."/>
            <person name="Vysotskaia V.S."/>
            <person name="Walker M."/>
            <person name="Wu D."/>
            <person name="Yu G."/>
            <person name="Fraser C.M."/>
            <person name="Venter J.C."/>
            <person name="Davis R.W."/>
        </authorList>
    </citation>
    <scope>NUCLEOTIDE SEQUENCE [LARGE SCALE GENOMIC DNA]</scope>
    <source>
        <strain>cv. Columbia</strain>
    </source>
</reference>
<reference key="2">
    <citation type="journal article" date="2017" name="Plant J.">
        <title>Araport11: a complete reannotation of the Arabidopsis thaliana reference genome.</title>
        <authorList>
            <person name="Cheng C.Y."/>
            <person name="Krishnakumar V."/>
            <person name="Chan A.P."/>
            <person name="Thibaud-Nissen F."/>
            <person name="Schobel S."/>
            <person name="Town C.D."/>
        </authorList>
    </citation>
    <scope>GENOME REANNOTATION</scope>
    <source>
        <strain>cv. Columbia</strain>
    </source>
</reference>
<reference key="3">
    <citation type="journal article" date="2001" name="Plant Physiol.">
        <title>Chloroplast and mitochondrial proteases in Arabidopsis. A proposed nomenclature.</title>
        <authorList>
            <person name="Adam Z."/>
            <person name="Adamska I."/>
            <person name="Nakabayashi K."/>
            <person name="Ostersetzer O."/>
            <person name="Haussuhl K."/>
            <person name="Manuell A."/>
            <person name="Zheng B."/>
            <person name="Vallon O."/>
            <person name="Rodermel S.R."/>
            <person name="Shinozaki K."/>
            <person name="Clarke A.K."/>
        </authorList>
    </citation>
    <scope>GENE FAMILY</scope>
    <scope>NOMENCLATURE</scope>
</reference>
<evidence type="ECO:0000255" key="1"/>
<evidence type="ECO:0000305" key="2"/>
<keyword id="KW-0150">Chloroplast</keyword>
<keyword id="KW-0378">Hydrolase</keyword>
<keyword id="KW-0934">Plastid</keyword>
<keyword id="KW-0645">Protease</keyword>
<keyword id="KW-1185">Reference proteome</keyword>
<keyword id="KW-0720">Serine protease</keyword>
<keyword id="KW-0809">Transit peptide</keyword>
<feature type="transit peptide" description="Chloroplast" evidence="1">
    <location>
        <begin position="1"/>
        <end position="45"/>
    </location>
</feature>
<feature type="chain" id="PRO_0000045833" description="Putative protease Do-like 6, chloroplastic">
    <location>
        <begin position="46"/>
        <end position="219"/>
    </location>
</feature>
<feature type="region of interest" description="Serine protease">
    <location>
        <begin position="61"/>
        <end position="216"/>
    </location>
</feature>
<feature type="active site" description="Charge relay system" evidence="1">
    <location>
        <position position="99"/>
    </location>
</feature>
<feature type="active site" description="Charge relay system" evidence="1">
    <location>
        <position position="130"/>
    </location>
</feature>
<feature type="active site" description="Charge relay system" evidence="1">
    <location>
        <position position="208"/>
    </location>
</feature>